<reference key="1">
    <citation type="journal article" date="1995" name="Nature">
        <title>A cap-binding protein complex mediating U snRNA export.</title>
        <authorList>
            <person name="Izaurralde E."/>
            <person name="Lewis J."/>
            <person name="Gamberi C."/>
            <person name="Jarmolowski A."/>
            <person name="McGuigan C."/>
            <person name="Mattaj A.W."/>
        </authorList>
    </citation>
    <scope>NUCLEOTIDE SEQUENCE [MRNA] (ISOFORM 1)</scope>
    <scope>PROTEIN SEQUENCE OF 9-25 AND 113-145</scope>
</reference>
<reference key="2">
    <citation type="journal article" date="1995" name="Nucleic Acids Res.">
        <title>Identification of the factors that interact with NCBP, an 80 kDa nuclear cap binding protein.</title>
        <authorList>
            <person name="Kataoka N."/>
            <person name="Ohno M."/>
            <person name="Moda I."/>
            <person name="Shimura Y."/>
        </authorList>
    </citation>
    <scope>NUCLEOTIDE SEQUENCE [MRNA] (ISOFORM 1)</scope>
    <source>
        <tissue>Cervix carcinoma</tissue>
    </source>
</reference>
<reference key="3">
    <citation type="journal article" date="2004" name="Nat. Genet.">
        <title>Complete sequencing and characterization of 21,243 full-length human cDNAs.</title>
        <authorList>
            <person name="Ota T."/>
            <person name="Suzuki Y."/>
            <person name="Nishikawa T."/>
            <person name="Otsuki T."/>
            <person name="Sugiyama T."/>
            <person name="Irie R."/>
            <person name="Wakamatsu A."/>
            <person name="Hayashi K."/>
            <person name="Sato H."/>
            <person name="Nagai K."/>
            <person name="Kimura K."/>
            <person name="Makita H."/>
            <person name="Sekine M."/>
            <person name="Obayashi M."/>
            <person name="Nishi T."/>
            <person name="Shibahara T."/>
            <person name="Tanaka T."/>
            <person name="Ishii S."/>
            <person name="Yamamoto J."/>
            <person name="Saito K."/>
            <person name="Kawai Y."/>
            <person name="Isono Y."/>
            <person name="Nakamura Y."/>
            <person name="Nagahari K."/>
            <person name="Murakami K."/>
            <person name="Yasuda T."/>
            <person name="Iwayanagi T."/>
            <person name="Wagatsuma M."/>
            <person name="Shiratori A."/>
            <person name="Sudo H."/>
            <person name="Hosoiri T."/>
            <person name="Kaku Y."/>
            <person name="Kodaira H."/>
            <person name="Kondo H."/>
            <person name="Sugawara M."/>
            <person name="Takahashi M."/>
            <person name="Kanda K."/>
            <person name="Yokoi T."/>
            <person name="Furuya T."/>
            <person name="Kikkawa E."/>
            <person name="Omura Y."/>
            <person name="Abe K."/>
            <person name="Kamihara K."/>
            <person name="Katsuta N."/>
            <person name="Sato K."/>
            <person name="Tanikawa M."/>
            <person name="Yamazaki M."/>
            <person name="Ninomiya K."/>
            <person name="Ishibashi T."/>
            <person name="Yamashita H."/>
            <person name="Murakawa K."/>
            <person name="Fujimori K."/>
            <person name="Tanai H."/>
            <person name="Kimata M."/>
            <person name="Watanabe M."/>
            <person name="Hiraoka S."/>
            <person name="Chiba Y."/>
            <person name="Ishida S."/>
            <person name="Ono Y."/>
            <person name="Takiguchi S."/>
            <person name="Watanabe S."/>
            <person name="Yosida M."/>
            <person name="Hotuta T."/>
            <person name="Kusano J."/>
            <person name="Kanehori K."/>
            <person name="Takahashi-Fujii A."/>
            <person name="Hara H."/>
            <person name="Tanase T.-O."/>
            <person name="Nomura Y."/>
            <person name="Togiya S."/>
            <person name="Komai F."/>
            <person name="Hara R."/>
            <person name="Takeuchi K."/>
            <person name="Arita M."/>
            <person name="Imose N."/>
            <person name="Musashino K."/>
            <person name="Yuuki H."/>
            <person name="Oshima A."/>
            <person name="Sasaki N."/>
            <person name="Aotsuka S."/>
            <person name="Yoshikawa Y."/>
            <person name="Matsunawa H."/>
            <person name="Ichihara T."/>
            <person name="Shiohata N."/>
            <person name="Sano S."/>
            <person name="Moriya S."/>
            <person name="Momiyama H."/>
            <person name="Satoh N."/>
            <person name="Takami S."/>
            <person name="Terashima Y."/>
            <person name="Suzuki O."/>
            <person name="Nakagawa S."/>
            <person name="Senoh A."/>
            <person name="Mizoguchi H."/>
            <person name="Goto Y."/>
            <person name="Shimizu F."/>
            <person name="Wakebe H."/>
            <person name="Hishigaki H."/>
            <person name="Watanabe T."/>
            <person name="Sugiyama A."/>
            <person name="Takemoto M."/>
            <person name="Kawakami B."/>
            <person name="Yamazaki M."/>
            <person name="Watanabe K."/>
            <person name="Kumagai A."/>
            <person name="Itakura S."/>
            <person name="Fukuzumi Y."/>
            <person name="Fujimori Y."/>
            <person name="Komiyama M."/>
            <person name="Tashiro H."/>
            <person name="Tanigami A."/>
            <person name="Fujiwara T."/>
            <person name="Ono T."/>
            <person name="Yamada K."/>
            <person name="Fujii Y."/>
            <person name="Ozaki K."/>
            <person name="Hirao M."/>
            <person name="Ohmori Y."/>
            <person name="Kawabata A."/>
            <person name="Hikiji T."/>
            <person name="Kobatake N."/>
            <person name="Inagaki H."/>
            <person name="Ikema Y."/>
            <person name="Okamoto S."/>
            <person name="Okitani R."/>
            <person name="Kawakami T."/>
            <person name="Noguchi S."/>
            <person name="Itoh T."/>
            <person name="Shigeta K."/>
            <person name="Senba T."/>
            <person name="Matsumura K."/>
            <person name="Nakajima Y."/>
            <person name="Mizuno T."/>
            <person name="Morinaga M."/>
            <person name="Sasaki M."/>
            <person name="Togashi T."/>
            <person name="Oyama M."/>
            <person name="Hata H."/>
            <person name="Watanabe M."/>
            <person name="Komatsu T."/>
            <person name="Mizushima-Sugano J."/>
            <person name="Satoh T."/>
            <person name="Shirai Y."/>
            <person name="Takahashi Y."/>
            <person name="Nakagawa K."/>
            <person name="Okumura K."/>
            <person name="Nagase T."/>
            <person name="Nomura N."/>
            <person name="Kikuchi H."/>
            <person name="Masuho Y."/>
            <person name="Yamashita R."/>
            <person name="Nakai K."/>
            <person name="Yada T."/>
            <person name="Nakamura Y."/>
            <person name="Ohara O."/>
            <person name="Isogai T."/>
            <person name="Sugano S."/>
        </authorList>
    </citation>
    <scope>NUCLEOTIDE SEQUENCE [LARGE SCALE MRNA] (ISOFORMS 1 AND 2)</scope>
    <source>
        <tissue>Brain</tissue>
    </source>
</reference>
<reference key="4">
    <citation type="submission" date="2004-06" db="EMBL/GenBank/DDBJ databases">
        <title>Identification of a human cell proliferation gene.</title>
        <authorList>
            <person name="Kim J.W."/>
        </authorList>
    </citation>
    <scope>NUCLEOTIDE SEQUENCE [LARGE SCALE MRNA] (ISOFORM 1)</scope>
</reference>
<reference key="5">
    <citation type="submission" date="2003-05" db="EMBL/GenBank/DDBJ databases">
        <title>Cloning of human full-length CDSs in BD Creator(TM) system donor vector.</title>
        <authorList>
            <person name="Kalnine N."/>
            <person name="Chen X."/>
            <person name="Rolfs A."/>
            <person name="Halleck A."/>
            <person name="Hines L."/>
            <person name="Eisenstein S."/>
            <person name="Koundinya M."/>
            <person name="Raphael J."/>
            <person name="Moreira D."/>
            <person name="Kelley T."/>
            <person name="LaBaer J."/>
            <person name="Lin Y."/>
            <person name="Phelan M."/>
            <person name="Farmer A."/>
        </authorList>
    </citation>
    <scope>NUCLEOTIDE SEQUENCE [LARGE SCALE MRNA]</scope>
</reference>
<reference key="6">
    <citation type="journal article" date="2006" name="Nature">
        <title>The DNA sequence, annotation and analysis of human chromosome 3.</title>
        <authorList>
            <person name="Muzny D.M."/>
            <person name="Scherer S.E."/>
            <person name="Kaul R."/>
            <person name="Wang J."/>
            <person name="Yu J."/>
            <person name="Sudbrak R."/>
            <person name="Buhay C.J."/>
            <person name="Chen R."/>
            <person name="Cree A."/>
            <person name="Ding Y."/>
            <person name="Dugan-Rocha S."/>
            <person name="Gill R."/>
            <person name="Gunaratne P."/>
            <person name="Harris R.A."/>
            <person name="Hawes A.C."/>
            <person name="Hernandez J."/>
            <person name="Hodgson A.V."/>
            <person name="Hume J."/>
            <person name="Jackson A."/>
            <person name="Khan Z.M."/>
            <person name="Kovar-Smith C."/>
            <person name="Lewis L.R."/>
            <person name="Lozado R.J."/>
            <person name="Metzker M.L."/>
            <person name="Milosavljevic A."/>
            <person name="Miner G.R."/>
            <person name="Morgan M.B."/>
            <person name="Nazareth L.V."/>
            <person name="Scott G."/>
            <person name="Sodergren E."/>
            <person name="Song X.-Z."/>
            <person name="Steffen D."/>
            <person name="Wei S."/>
            <person name="Wheeler D.A."/>
            <person name="Wright M.W."/>
            <person name="Worley K.C."/>
            <person name="Yuan Y."/>
            <person name="Zhang Z."/>
            <person name="Adams C.Q."/>
            <person name="Ansari-Lari M.A."/>
            <person name="Ayele M."/>
            <person name="Brown M.J."/>
            <person name="Chen G."/>
            <person name="Chen Z."/>
            <person name="Clendenning J."/>
            <person name="Clerc-Blankenburg K.P."/>
            <person name="Chen R."/>
            <person name="Chen Z."/>
            <person name="Davis C."/>
            <person name="Delgado O."/>
            <person name="Dinh H.H."/>
            <person name="Dong W."/>
            <person name="Draper H."/>
            <person name="Ernst S."/>
            <person name="Fu G."/>
            <person name="Gonzalez-Garay M.L."/>
            <person name="Garcia D.K."/>
            <person name="Gillett W."/>
            <person name="Gu J."/>
            <person name="Hao B."/>
            <person name="Haugen E."/>
            <person name="Havlak P."/>
            <person name="He X."/>
            <person name="Hennig S."/>
            <person name="Hu S."/>
            <person name="Huang W."/>
            <person name="Jackson L.R."/>
            <person name="Jacob L.S."/>
            <person name="Kelly S.H."/>
            <person name="Kube M."/>
            <person name="Levy R."/>
            <person name="Li Z."/>
            <person name="Liu B."/>
            <person name="Liu J."/>
            <person name="Liu W."/>
            <person name="Lu J."/>
            <person name="Maheshwari M."/>
            <person name="Nguyen B.-V."/>
            <person name="Okwuonu G.O."/>
            <person name="Palmeiri A."/>
            <person name="Pasternak S."/>
            <person name="Perez L.M."/>
            <person name="Phelps K.A."/>
            <person name="Plopper F.J."/>
            <person name="Qiang B."/>
            <person name="Raymond C."/>
            <person name="Rodriguez R."/>
            <person name="Saenphimmachak C."/>
            <person name="Santibanez J."/>
            <person name="Shen H."/>
            <person name="Shen Y."/>
            <person name="Subramanian S."/>
            <person name="Tabor P.E."/>
            <person name="Verduzco D."/>
            <person name="Waldron L."/>
            <person name="Wang J."/>
            <person name="Wang J."/>
            <person name="Wang Q."/>
            <person name="Williams G.A."/>
            <person name="Wong G.K.-S."/>
            <person name="Yao Z."/>
            <person name="Zhang J."/>
            <person name="Zhang X."/>
            <person name="Zhao G."/>
            <person name="Zhou J."/>
            <person name="Zhou Y."/>
            <person name="Nelson D."/>
            <person name="Lehrach H."/>
            <person name="Reinhardt R."/>
            <person name="Naylor S.L."/>
            <person name="Yang H."/>
            <person name="Olson M."/>
            <person name="Weinstock G."/>
            <person name="Gibbs R.A."/>
        </authorList>
    </citation>
    <scope>NUCLEOTIDE SEQUENCE [LARGE SCALE GENOMIC DNA]</scope>
</reference>
<reference key="7">
    <citation type="submission" date="2005-09" db="EMBL/GenBank/DDBJ databases">
        <authorList>
            <person name="Mural R.J."/>
            <person name="Istrail S."/>
            <person name="Sutton G.G."/>
            <person name="Florea L."/>
            <person name="Halpern A.L."/>
            <person name="Mobarry C.M."/>
            <person name="Lippert R."/>
            <person name="Walenz B."/>
            <person name="Shatkay H."/>
            <person name="Dew I."/>
            <person name="Miller J.R."/>
            <person name="Flanigan M.J."/>
            <person name="Edwards N.J."/>
            <person name="Bolanos R."/>
            <person name="Fasulo D."/>
            <person name="Halldorsson B.V."/>
            <person name="Hannenhalli S."/>
            <person name="Turner R."/>
            <person name="Yooseph S."/>
            <person name="Lu F."/>
            <person name="Nusskern D.R."/>
            <person name="Shue B.C."/>
            <person name="Zheng X.H."/>
            <person name="Zhong F."/>
            <person name="Delcher A.L."/>
            <person name="Huson D.H."/>
            <person name="Kravitz S.A."/>
            <person name="Mouchard L."/>
            <person name="Reinert K."/>
            <person name="Remington K.A."/>
            <person name="Clark A.G."/>
            <person name="Waterman M.S."/>
            <person name="Eichler E.E."/>
            <person name="Adams M.D."/>
            <person name="Hunkapiller M.W."/>
            <person name="Myers E.W."/>
            <person name="Venter J.C."/>
        </authorList>
    </citation>
    <scope>NUCLEOTIDE SEQUENCE [LARGE SCALE GENOMIC DNA]</scope>
</reference>
<reference key="8">
    <citation type="journal article" date="2004" name="Genome Res.">
        <title>The status, quality, and expansion of the NIH full-length cDNA project: the Mammalian Gene Collection (MGC).</title>
        <authorList>
            <consortium name="The MGC Project Team"/>
        </authorList>
    </citation>
    <scope>NUCLEOTIDE SEQUENCE [LARGE SCALE MRNA] (ISOFORM 1)</scope>
    <source>
        <tissue>Cervix</tissue>
    </source>
</reference>
<reference key="9">
    <citation type="journal article" date="1996" name="J. Cell Biol.">
        <title>A nuclear cap-binding complex binds Balbiani ring pre-mRNA cotranscriptionally and accompanies the ribonucleoprotein particle during nuclear export.</title>
        <authorList>
            <person name="Visa N."/>
            <person name="Izaurralde E."/>
            <person name="Ferreira J."/>
            <person name="Daneholt B."/>
            <person name="Mattaj I.W."/>
        </authorList>
    </citation>
    <scope>SUBCELLULAR LOCATION</scope>
</reference>
<reference key="10">
    <citation type="journal article" date="1997" name="Mol. Cell. Biol.">
        <title>Interaction between the human nuclear cap-binding protein complex and hnRNP F.</title>
        <authorList>
            <person name="Gamberi C."/>
            <person name="Izaurralde E."/>
            <person name="Beisel C."/>
            <person name="Mattaj I.W."/>
        </authorList>
    </citation>
    <scope>INTERACTION WITH HNRNPF AND HNRNPH1</scope>
</reference>
<reference key="11">
    <citation type="journal article" date="2001" name="Cell">
        <title>Evidence for a pioneer round of mRNA translation: mRNAs subject to nonsense-mediated decay in mammalian cells are bound by CBP80 and CBP20.</title>
        <authorList>
            <person name="Ishigaki Y."/>
            <person name="Li X."/>
            <person name="Serin G."/>
            <person name="Maquat L.E."/>
        </authorList>
    </citation>
    <scope>FUNCTION IN PIONEER ROUND OF MRNA TRANSLATION</scope>
</reference>
<reference key="12">
    <citation type="journal article" date="2004" name="Nat. Struct. Mol. Biol.">
        <title>eIF4G is required for the pioneer round of translation in mammalian cells.</title>
        <authorList>
            <person name="Lejeune F."/>
            <person name="Ranganathan A.C."/>
            <person name="Maquat L.E."/>
        </authorList>
    </citation>
    <scope>FUNCTION IN PIONEER ROUND OF MRNA TRANSLATION</scope>
    <scope>INTERACTION WITH EIF4G1</scope>
</reference>
<reference key="13">
    <citation type="journal article" date="2006" name="Cell">
        <title>Human mRNA export machinery recruited to the 5' end of mRNA.</title>
        <authorList>
            <person name="Cheng H."/>
            <person name="Dufu K."/>
            <person name="Lee C.-S."/>
            <person name="Hsu J.L."/>
            <person name="Dias A."/>
            <person name="Reed R."/>
        </authorList>
    </citation>
    <scope>FUNCTION IN MRNA EXPORT</scope>
</reference>
<reference key="14">
    <citation type="journal article" date="2007" name="J. Biol. Chem.">
        <title>The interaction between cap-binding complex and RNA export factor is required for intronless mRNA export.</title>
        <authorList>
            <person name="Nojima T."/>
            <person name="Hirose T."/>
            <person name="Kimura H."/>
            <person name="Hagiwara M."/>
        </authorList>
    </citation>
    <scope>FUNCTION IN MRNA EXPORT</scope>
    <scope>INTERACTION WITH ALYREF/THOC4</scope>
</reference>
<reference key="15">
    <citation type="journal article" date="2007" name="Nat. Struct. Mol. Biol.">
        <title>Failsafe nonsense-mediated mRNA decay does not detectably target eIF4E-bound mRNA.</title>
        <authorList>
            <person name="Matsuda D."/>
            <person name="Hosoda N."/>
            <person name="Kim Y.K."/>
            <person name="Maquat L.E."/>
        </authorList>
    </citation>
    <scope>FUNCTION IN NONSENSE-MEDIATED MRNA DECAY</scope>
</reference>
<reference key="16">
    <citation type="journal article" date="2007" name="Science">
        <title>ATM and ATR substrate analysis reveals extensive protein networks responsive to DNA damage.</title>
        <authorList>
            <person name="Matsuoka S."/>
            <person name="Ballif B.A."/>
            <person name="Smogorzewska A."/>
            <person name="McDonald E.R. III"/>
            <person name="Hurov K.E."/>
            <person name="Luo J."/>
            <person name="Bakalarski C.E."/>
            <person name="Zhao Z."/>
            <person name="Solimini N."/>
            <person name="Lerenthal Y."/>
            <person name="Shiloh Y."/>
            <person name="Gygi S.P."/>
            <person name="Elledge S.J."/>
        </authorList>
    </citation>
    <scope>PHOSPHORYLATION [LARGE SCALE ANALYSIS] AT SER-18</scope>
    <scope>IDENTIFICATION BY MASS SPECTROMETRY [LARGE SCALE ANALYSIS]</scope>
    <source>
        <tissue>Embryonic kidney</tissue>
    </source>
</reference>
<reference key="17">
    <citation type="journal article" date="2008" name="EMBO Rep.">
        <title>NMD resulting from encephalomyocarditis virus IRES-directed translation initiation seems to be restricted to CBP80/20-bound mRNA.</title>
        <authorList>
            <person name="Woeller C.F."/>
            <person name="Gaspari M."/>
            <person name="Isken O."/>
            <person name="Maquat L.E."/>
        </authorList>
    </citation>
    <scope>FUNCTION IN NONSENSE-MEDIATED MRNA DECAY</scope>
</reference>
<reference key="18">
    <citation type="journal article" date="2009" name="Cell">
        <title>Ars2 links the nuclear cap-binding complex to RNA interference and cell proliferation.</title>
        <authorList>
            <person name="Gruber J.J."/>
            <person name="Zatechka D.S."/>
            <person name="Sabin L.R."/>
            <person name="Yong J."/>
            <person name="Lum J.J."/>
            <person name="Kong M."/>
            <person name="Zong W.-X."/>
            <person name="Zhang Z."/>
            <person name="Lau C.-K."/>
            <person name="Rawlings J."/>
            <person name="Cherry S."/>
            <person name="Ihle J.N."/>
            <person name="Dreyfuss G."/>
            <person name="Thompson C.B."/>
        </authorList>
    </citation>
    <scope>FUNCTION IN MIRNAS BIOGENESIS</scope>
</reference>
<reference key="19">
    <citation type="journal article" date="2009" name="Sci. Signal.">
        <title>Quantitative phosphoproteomic analysis of T cell receptor signaling reveals system-wide modulation of protein-protein interactions.</title>
        <authorList>
            <person name="Mayya V."/>
            <person name="Lundgren D.H."/>
            <person name="Hwang S.-I."/>
            <person name="Rezaul K."/>
            <person name="Wu L."/>
            <person name="Eng J.K."/>
            <person name="Rodionov V."/>
            <person name="Han D.K."/>
        </authorList>
    </citation>
    <scope>IDENTIFICATION BY MASS SPECTROMETRY [LARGE SCALE ANALYSIS]</scope>
    <source>
        <tissue>Leukemic T-cell</tissue>
    </source>
</reference>
<reference key="20">
    <citation type="journal article" date="2011" name="BMC Syst. Biol.">
        <title>Initial characterization of the human central proteome.</title>
        <authorList>
            <person name="Burkard T.R."/>
            <person name="Planyavsky M."/>
            <person name="Kaupe I."/>
            <person name="Breitwieser F.P."/>
            <person name="Buerckstuemmer T."/>
            <person name="Bennett K.L."/>
            <person name="Superti-Furga G."/>
            <person name="Colinge J."/>
        </authorList>
    </citation>
    <scope>IDENTIFICATION BY MASS SPECTROMETRY [LARGE SCALE ANALYSIS]</scope>
</reference>
<reference key="21">
    <citation type="journal article" date="2012" name="Proc. Natl. Acad. Sci. U.S.A.">
        <title>N-terminal acetylome analyses and functional insights of the N-terminal acetyltransferase NatB.</title>
        <authorList>
            <person name="Van Damme P."/>
            <person name="Lasa M."/>
            <person name="Polevoda B."/>
            <person name="Gazquez C."/>
            <person name="Elosegui-Artola A."/>
            <person name="Kim D.S."/>
            <person name="De Juan-Pardo E."/>
            <person name="Demeyer K."/>
            <person name="Hole K."/>
            <person name="Larrea E."/>
            <person name="Timmerman E."/>
            <person name="Prieto J."/>
            <person name="Arnesen T."/>
            <person name="Sherman F."/>
            <person name="Gevaert K."/>
            <person name="Aldabe R."/>
        </authorList>
    </citation>
    <scope>ACETYLATION [LARGE SCALE ANALYSIS] AT SER-2</scope>
    <scope>CLEAVAGE OF INITIATOR METHIONINE [LARGE SCALE ANALYSIS]</scope>
    <scope>IDENTIFICATION BY MASS SPECTROMETRY [LARGE SCALE ANALYSIS]</scope>
</reference>
<reference key="22">
    <citation type="journal article" date="2013" name="J. Proteome Res.">
        <title>Toward a comprehensive characterization of a human cancer cell phosphoproteome.</title>
        <authorList>
            <person name="Zhou H."/>
            <person name="Di Palma S."/>
            <person name="Preisinger C."/>
            <person name="Peng M."/>
            <person name="Polat A.N."/>
            <person name="Heck A.J."/>
            <person name="Mohammed S."/>
        </authorList>
    </citation>
    <scope>PHOSPHORYLATION [LARGE SCALE ANALYSIS] AT SER-13</scope>
    <scope>IDENTIFICATION BY MASS SPECTROMETRY [LARGE SCALE ANALYSIS]</scope>
    <source>
        <tissue>Cervix carcinoma</tissue>
        <tissue>Erythroleukemia</tissue>
    </source>
</reference>
<reference key="23">
    <citation type="journal article" date="2014" name="Mol. Cell. Proteomics">
        <title>Immunoaffinity enrichment and mass spectrometry analysis of protein methylation.</title>
        <authorList>
            <person name="Guo A."/>
            <person name="Gu H."/>
            <person name="Zhou J."/>
            <person name="Mulhern D."/>
            <person name="Wang Y."/>
            <person name="Lee K.A."/>
            <person name="Yang V."/>
            <person name="Aguiar M."/>
            <person name="Kornhauser J."/>
            <person name="Jia X."/>
            <person name="Ren J."/>
            <person name="Beausoleil S.A."/>
            <person name="Silva J.C."/>
            <person name="Vemulapalli V."/>
            <person name="Bedford M.T."/>
            <person name="Comb M.J."/>
        </authorList>
    </citation>
    <scope>METHYLATION [LARGE SCALE ANALYSIS] AT ARG-146</scope>
    <scope>IDENTIFICATION BY MASS SPECTROMETRY [LARGE SCALE ANALYSIS]</scope>
    <source>
        <tissue>Colon carcinoma</tissue>
    </source>
</reference>
<reference key="24">
    <citation type="journal article" date="2015" name="Nat. Commun.">
        <title>mRNA export through an additional cap-binding complex consisting of NCBP1 and NCBP3.</title>
        <authorList>
            <person name="Gebhardt A."/>
            <person name="Habjan M."/>
            <person name="Benda C."/>
            <person name="Meiler A."/>
            <person name="Haas D.A."/>
            <person name="Hein M.Y."/>
            <person name="Mann A."/>
            <person name="Mann M."/>
            <person name="Habermann B."/>
            <person name="Pichlmair A."/>
        </authorList>
    </citation>
    <scope>FUNCTION</scope>
    <scope>INTERACTION WITH NCBP1; SRRT; KPNA3 AND PHAX</scope>
    <scope>RNA-BINDING</scope>
    <scope>IDENTIFICATION BY MASS SPECTROMETRY</scope>
</reference>
<reference key="25">
    <citation type="journal article" date="2021" name="Ann. Neurol.">
        <title>Dominant KPNA3 Mutations Cause Infantile-Onset Hereditary Spastic Paraplegia.</title>
        <authorList>
            <person name="Schob C."/>
            <person name="Hempel M."/>
            <person name="Safka Brozkova D."/>
            <person name="Jiang H."/>
            <person name="Kim S.Y."/>
            <person name="Batzir N.A."/>
            <person name="Orenstein N."/>
            <person name="Bierhals T."/>
            <person name="Johannsen J."/>
            <person name="Uhrova Meszarosova A."/>
            <person name="Chae J.H."/>
            <person name="Seeman P."/>
            <person name="Woidy M."/>
            <person name="Fang F."/>
            <person name="Kubisch C."/>
            <person name="Kindler S."/>
            <person name="Denecke J."/>
        </authorList>
    </citation>
    <scope>INTERACTION WITH KPNA3</scope>
</reference>
<reference key="26">
    <citation type="journal article" date="2001" name="Mol. Cell">
        <title>Crystal structure of the human nuclear cap binding complex.</title>
        <authorList>
            <person name="Mazza C."/>
            <person name="Ohno M."/>
            <person name="Segref A."/>
            <person name="Mattaj I.W."/>
            <person name="Cusack S."/>
        </authorList>
    </citation>
    <scope>X-RAY CRYSTALLOGRAPHY (2.0 ANGSTROMS) OF 20-790 IN COMPLEX WITH NCBP1</scope>
    <scope>RNA-BINDING</scope>
    <scope>MUTAGENESIS OF PHE-25; TYR-43; ASN-46; PHE-83; ASP-114; ASP-116 AND PHE-119</scope>
</reference>
<reference key="27">
    <citation type="journal article" date="2002" name="EMBO J.">
        <title>Large-scale induced fit recognition of an m(7)GpppG cap analogue by the human nuclear cap-binding complex.</title>
        <authorList>
            <person name="Mazza C."/>
            <person name="Segref A."/>
            <person name="Mattaj I.W."/>
            <person name="Cusack S."/>
        </authorList>
    </citation>
    <scope>X-RAY CRYSTALLOGRAPHY (2.15 ANGSTROMS) OF 20-790 IN COMPLEX WITH NCBP1 AND MRNA CAP</scope>
    <scope>RNA-BINDING</scope>
    <scope>MUTAGENESIS OF TYR-20; TYR-43; ARG-112 AND TYR-138</scope>
</reference>
<reference key="28">
    <citation type="journal article" date="2002" name="Nat. Struct. Biol.">
        <title>Structural basis of m7GpppG binding to the nuclear cap-binding protein complex.</title>
        <authorList>
            <person name="Calero G."/>
            <person name="Wilson K.F."/>
            <person name="Ly T."/>
            <person name="Rios-Steiner J.L."/>
            <person name="Clardy J.C."/>
            <person name="Cerione R.A."/>
        </authorList>
    </citation>
    <scope>X-RAY CRYSTALLOGRAPHY (2.11 ANGSTROMS) IN COMPLEX WITH NCBP1 AND MRNA CAP</scope>
    <scope>RNA-BINDING</scope>
</reference>
<name>NCBP2_HUMAN</name>
<keyword id="KW-0002">3D-structure</keyword>
<keyword id="KW-0007">Acetylation</keyword>
<keyword id="KW-0025">Alternative splicing</keyword>
<keyword id="KW-0963">Cytoplasm</keyword>
<keyword id="KW-0903">Direct protein sequencing</keyword>
<keyword id="KW-0488">Methylation</keyword>
<keyword id="KW-0507">mRNA processing</keyword>
<keyword id="KW-0508">mRNA splicing</keyword>
<keyword id="KW-0509">mRNA transport</keyword>
<keyword id="KW-0866">Nonsense-mediated mRNA decay</keyword>
<keyword id="KW-0539">Nucleus</keyword>
<keyword id="KW-0597">Phosphoprotein</keyword>
<keyword id="KW-1267">Proteomics identification</keyword>
<keyword id="KW-1185">Reference proteome</keyword>
<keyword id="KW-0694">RNA-binding</keyword>
<keyword id="KW-0943">RNA-mediated gene silencing</keyword>
<keyword id="KW-0810">Translation regulation</keyword>
<keyword id="KW-0813">Transport</keyword>
<evidence type="ECO:0000255" key="1">
    <source>
        <dbReference type="PROSITE-ProRule" id="PRU00176"/>
    </source>
</evidence>
<evidence type="ECO:0000256" key="2">
    <source>
        <dbReference type="SAM" id="MobiDB-lite"/>
    </source>
</evidence>
<evidence type="ECO:0000269" key="3">
    <source>
    </source>
</evidence>
<evidence type="ECO:0000269" key="4">
    <source>
    </source>
</evidence>
<evidence type="ECO:0000269" key="5">
    <source>
    </source>
</evidence>
<evidence type="ECO:0000269" key="6">
    <source>
    </source>
</evidence>
<evidence type="ECO:0000269" key="7">
    <source>
    </source>
</evidence>
<evidence type="ECO:0000269" key="8">
    <source>
    </source>
</evidence>
<evidence type="ECO:0000269" key="9">
    <source>
    </source>
</evidence>
<evidence type="ECO:0000269" key="10">
    <source>
    </source>
</evidence>
<evidence type="ECO:0000269" key="11">
    <source>
    </source>
</evidence>
<evidence type="ECO:0000269" key="12">
    <source>
    </source>
</evidence>
<evidence type="ECO:0000269" key="13">
    <source>
    </source>
</evidence>
<evidence type="ECO:0000269" key="14">
    <source>
    </source>
</evidence>
<evidence type="ECO:0000269" key="15">
    <source>
    </source>
</evidence>
<evidence type="ECO:0000269" key="16">
    <source>
    </source>
</evidence>
<evidence type="ECO:0000303" key="17">
    <source>
    </source>
</evidence>
<evidence type="ECO:0000305" key="18"/>
<evidence type="ECO:0007744" key="19">
    <source>
    </source>
</evidence>
<evidence type="ECO:0007744" key="20">
    <source>
    </source>
</evidence>
<evidence type="ECO:0007744" key="21">
    <source>
    </source>
</evidence>
<evidence type="ECO:0007744" key="22">
    <source>
    </source>
</evidence>
<evidence type="ECO:0007829" key="23">
    <source>
        <dbReference type="PDB" id="1H2T"/>
    </source>
</evidence>
<evidence type="ECO:0007829" key="24">
    <source>
        <dbReference type="PDB" id="1H2V"/>
    </source>
</evidence>
<evidence type="ECO:0007829" key="25">
    <source>
        <dbReference type="PDB" id="5OOB"/>
    </source>
</evidence>
<evidence type="ECO:0007829" key="26">
    <source>
        <dbReference type="PDB" id="6D0Y"/>
    </source>
</evidence>
<evidence type="ECO:0007829" key="27">
    <source>
        <dbReference type="PDB" id="8SUY"/>
    </source>
</evidence>
<feature type="initiator methionine" description="Removed" evidence="20">
    <location>
        <position position="1"/>
    </location>
</feature>
<feature type="chain" id="PRO_0000081499" description="Nuclear cap-binding protein subunit 2">
    <location>
        <begin position="2"/>
        <end position="156"/>
    </location>
</feature>
<feature type="domain" description="RRM" evidence="1">
    <location>
        <begin position="40"/>
        <end position="118"/>
    </location>
</feature>
<feature type="region of interest" description="Disordered" evidence="2">
    <location>
        <begin position="124"/>
        <end position="156"/>
    </location>
</feature>
<feature type="compositionally biased region" description="Basic and acidic residues" evidence="2">
    <location>
        <begin position="134"/>
        <end position="144"/>
    </location>
</feature>
<feature type="binding site" evidence="5 6">
    <location>
        <position position="20"/>
    </location>
    <ligand>
        <name>mRNA</name>
        <dbReference type="ChEBI" id="CHEBI:33699"/>
    </ligand>
    <ligandPart>
        <name>mRNA cap</name>
    </ligandPart>
</feature>
<feature type="binding site" evidence="5 6">
    <location>
        <position position="43"/>
    </location>
    <ligand>
        <name>mRNA</name>
        <dbReference type="ChEBI" id="CHEBI:33699"/>
    </ligand>
    <ligandPart>
        <name>mRNA cap</name>
    </ligandPart>
</feature>
<feature type="binding site">
    <location>
        <begin position="112"/>
        <end position="116"/>
    </location>
    <ligand>
        <name>mRNA</name>
        <dbReference type="ChEBI" id="CHEBI:33699"/>
    </ligand>
    <ligandPart>
        <name>mRNA cap</name>
    </ligandPart>
</feature>
<feature type="binding site">
    <location>
        <begin position="123"/>
        <end position="127"/>
    </location>
    <ligand>
        <name>mRNA</name>
        <dbReference type="ChEBI" id="CHEBI:33699"/>
    </ligand>
    <ligandPart>
        <name>mRNA cap</name>
    </ligandPart>
</feature>
<feature type="binding site">
    <location>
        <begin position="133"/>
        <end position="134"/>
    </location>
    <ligand>
        <name>mRNA</name>
        <dbReference type="ChEBI" id="CHEBI:33699"/>
    </ligand>
    <ligandPart>
        <name>mRNA cap</name>
    </ligandPart>
</feature>
<feature type="modified residue" description="N-acetylserine" evidence="20">
    <location>
        <position position="2"/>
    </location>
</feature>
<feature type="modified residue" description="Phosphoserine" evidence="21">
    <location>
        <position position="13"/>
    </location>
</feature>
<feature type="modified residue" description="Phosphoserine" evidence="19">
    <location>
        <position position="18"/>
    </location>
</feature>
<feature type="modified residue" description="Omega-N-methylarginine" evidence="22">
    <location>
        <position position="146"/>
    </location>
</feature>
<feature type="splice variant" id="VSP_038125" description="In isoform 2." evidence="17">
    <original>MSGGLLKALRSDSYVELSQYRDQHFR</original>
    <variation>MVLRKLYA</variation>
    <location>
        <begin position="1"/>
        <end position="26"/>
    </location>
</feature>
<feature type="splice variant" id="VSP_053823" description="In isoform 3." evidence="18">
    <original>CTLYVGNLSFYTTEEQIYELFSKSGDIKKIIMGLDKMKKTACGFCFVEYYSRAD</original>
    <variation>Y</variation>
    <location>
        <begin position="40"/>
        <end position="93"/>
    </location>
</feature>
<feature type="mutagenesis site" description="Abolishes mRNA cap-binding." evidence="5">
    <original>Y</original>
    <variation>A</variation>
    <location>
        <position position="20"/>
    </location>
</feature>
<feature type="mutagenesis site" description="Strongly impairs mRNA cap-binding." evidence="5">
    <original>Y</original>
    <variation>F</variation>
    <location>
        <position position="20"/>
    </location>
</feature>
<feature type="mutagenesis site" description="Does not affect mRNA cap-binding." evidence="3">
    <original>F</original>
    <variation>A</variation>
    <location>
        <position position="25"/>
    </location>
</feature>
<feature type="mutagenesis site" description="Abolishes mRNA cap-binding." evidence="3 5">
    <original>Y</original>
    <variation>A</variation>
    <location>
        <position position="43"/>
    </location>
</feature>
<feature type="mutagenesis site" description="Does not affect mRNA cap-binding." evidence="3 5">
    <original>Y</original>
    <variation>F</variation>
    <location>
        <position position="43"/>
    </location>
</feature>
<feature type="mutagenesis site" description="Does not affect mRNA cap-binding." evidence="3">
    <original>N</original>
    <variation>A</variation>
    <location>
        <position position="46"/>
    </location>
</feature>
<feature type="mutagenesis site" description="Abolishes mRNA cap-binding." evidence="3">
    <original>F</original>
    <variation>A</variation>
    <location>
        <position position="83"/>
    </location>
</feature>
<feature type="mutagenesis site" description="Impairs mRNA cap-binding.">
    <original>F</original>
    <variation>A</variation>
    <location>
        <position position="85"/>
    </location>
</feature>
<feature type="mutagenesis site" description="Does not affect mRNA cap-binding." evidence="5">
    <original>R</original>
    <variation>A</variation>
    <variation>T</variation>
    <location>
        <position position="112"/>
    </location>
</feature>
<feature type="mutagenesis site" description="Does not affect mRNA cap-binding." evidence="3">
    <original>D</original>
    <variation>A</variation>
    <location>
        <position position="114"/>
    </location>
</feature>
<feature type="mutagenesis site" description="Abolishes mRNA cap-binding." evidence="3">
    <original>D</original>
    <variation>A</variation>
    <location>
        <position position="116"/>
    </location>
</feature>
<feature type="mutagenesis site" description="Does not affect mRNA cap-binding." evidence="3">
    <original>F</original>
    <variation>A</variation>
    <location>
        <position position="119"/>
    </location>
</feature>
<feature type="mutagenesis site" description="Does not affect mRNA cap-binding." evidence="5">
    <original>Y</original>
    <variation>A</variation>
    <location>
        <position position="138"/>
    </location>
</feature>
<feature type="sequence conflict" description="In Ref. 2; BAA09599." evidence="18" ref="2">
    <original>A</original>
    <variation>S</variation>
    <location>
        <position position="97"/>
    </location>
</feature>
<feature type="helix" evidence="23">
    <location>
        <begin position="7"/>
        <end position="10"/>
    </location>
</feature>
<feature type="helix" evidence="23">
    <location>
        <begin position="13"/>
        <end position="15"/>
    </location>
</feature>
<feature type="strand" evidence="26">
    <location>
        <begin position="25"/>
        <end position="27"/>
    </location>
</feature>
<feature type="turn" evidence="24">
    <location>
        <begin position="34"/>
        <end position="38"/>
    </location>
</feature>
<feature type="strand" evidence="24">
    <location>
        <begin position="41"/>
        <end position="46"/>
    </location>
</feature>
<feature type="helix" evidence="24">
    <location>
        <begin position="53"/>
        <end position="60"/>
    </location>
</feature>
<feature type="helix" evidence="24">
    <location>
        <begin position="61"/>
        <end position="63"/>
    </location>
</feature>
<feature type="strand" evidence="24">
    <location>
        <begin position="66"/>
        <end position="73"/>
    </location>
</feature>
<feature type="turn" evidence="24">
    <location>
        <begin position="75"/>
        <end position="77"/>
    </location>
</feature>
<feature type="strand" evidence="24">
    <location>
        <begin position="80"/>
        <end position="90"/>
    </location>
</feature>
<feature type="helix" evidence="24">
    <location>
        <begin position="91"/>
        <end position="100"/>
    </location>
</feature>
<feature type="turn" evidence="24">
    <location>
        <begin position="101"/>
        <end position="103"/>
    </location>
</feature>
<feature type="strand" evidence="24">
    <location>
        <begin position="104"/>
        <end position="106"/>
    </location>
</feature>
<feature type="strand" evidence="24">
    <location>
        <begin position="112"/>
        <end position="117"/>
    </location>
</feature>
<feature type="turn" evidence="23">
    <location>
        <begin position="121"/>
        <end position="124"/>
    </location>
</feature>
<feature type="strand" evidence="27">
    <location>
        <begin position="128"/>
        <end position="132"/>
    </location>
</feature>
<feature type="helix" evidence="23">
    <location>
        <begin position="134"/>
        <end position="137"/>
    </location>
</feature>
<feature type="helix" evidence="23">
    <location>
        <begin position="144"/>
        <end position="146"/>
    </location>
</feature>
<feature type="strand" evidence="25">
    <location>
        <begin position="147"/>
        <end position="149"/>
    </location>
</feature>
<feature type="helix" evidence="25">
    <location>
        <begin position="151"/>
        <end position="154"/>
    </location>
</feature>
<gene>
    <name type="primary">NCBP2</name>
    <name type="synonym">CBP20</name>
    <name type="ORF">PIG55</name>
</gene>
<protein>
    <recommendedName>
        <fullName>Nuclear cap-binding protein subunit 2</fullName>
    </recommendedName>
    <alternativeName>
        <fullName>20 kDa nuclear cap-binding protein</fullName>
    </alternativeName>
    <alternativeName>
        <fullName>Cell proliferation-inducing gene 55 protein</fullName>
    </alternativeName>
    <alternativeName>
        <fullName>NCBP 20 kDa subunit</fullName>
        <shortName>CBP20</shortName>
    </alternativeName>
    <alternativeName>
        <fullName>NCBP-interacting protein 1</fullName>
        <shortName>NIP1</shortName>
    </alternativeName>
</protein>
<proteinExistence type="evidence at protein level"/>
<sequence>MSGGLLKALRSDSYVELSQYRDQHFRGDNEEQEKLLKKSCTLYVGNLSFYTTEEQIYELFSKSGDIKKIIMGLDKMKKTACGFCFVEYYSRADAENAMRYINGTRLDDRIIRTDWDAGFKEGRQYGRGRSGGQVRDEYRQDYDAGRGGYGKLAQNQ</sequence>
<comment type="function">
    <text evidence="4 7 8 9 10 11 12 13">Component of the cap-binding complex (CBC), which binds co-transcriptionally to the 5' cap of pre-mRNAs and is involved in various processes such as pre-mRNA splicing, translation regulation, nonsense-mediated mRNA decay, RNA-mediated gene silencing (RNAi) by microRNAs (miRNAs) and mRNA export. The CBC complex is involved in mRNA export from the nucleus via its interaction with ALYREF/THOC4/ALY, leading to the recruitment of the mRNA export machinery to the 5' end of mRNA and to mRNA export in a 5' to 3' direction through the nuclear pore. The CBC complex is also involved in mediating U snRNA and intronless mRNAs export from the nucleus. The CBC complex is essential for a pioneer round of mRNA translation, before steady state translation when the CBC complex is replaced by cytoplasmic cap-binding protein eIF4E. The pioneer round of mRNA translation mediated by the CBC complex plays a central role in nonsense-mediated mRNA decay (NMD), NMD only taking place in mRNAs bound to the CBC complex, but not on eIF4E-bound mRNAs. The CBC complex enhances NMD in mRNAs containing at least one exon-junction complex (EJC) via its interaction with UPF1, promoting the interaction between UPF1 and UPF2. The CBC complex is also involved in 'failsafe' NMD, which is independent of the EJC complex, while it does not participate in Staufen-mediated mRNA decay (SMD). During cell proliferation, the CBC complex is also involved in microRNAs (miRNAs) biogenesis via its interaction with SRRT/ARS2, thereby being required for miRNA-mediated RNA interference. The CBC complex also acts as a negative regulator of PARN, thereby acting as an inhibitor of mRNA deadenylation. In the CBC complex, NCBP2/CBP20 recognizes and binds capped RNAs (m7GpppG-capped RNA) but requires NCBP1/CBP80 to stabilize the movement of its N-terminal loop and lock the CBC into a high affinity cap-binding state with the cap structure. The conventional cap-binding complex with NCBP2 binds both small nuclear RNA (snRNA) and messenger (mRNA) and is involved in their export from the nucleus (PubMed:26382858).</text>
</comment>
<comment type="subunit">
    <text evidence="3 5 6 7 9 13 14 16">Component of the nuclear cap-binding complex (CBC), a heterodimer composed of NCBP1/CBP80 and NCBP2/CBP20 that interacts with m7GpppG-capped RNA (PubMed:26382858). Found in a U snRNA export complex with PHAX/RNUXA, NCBP1/CBP80, NCBP2/CBP20, RAN, XPO1 and m7G-capped RNA. Interacts with PHAX/RNUXA, EIF4G1, HNRNPF, HNRNPH1 and ALYREF/THOC4/ALY. Interacts with SRRT/ARS2 and KPNA3 (PubMed:26382858, PubMed:34564892).</text>
</comment>
<comment type="interaction">
    <interactant intactId="EBI-464729">
        <id>P52298</id>
    </interactant>
    <interactant intactId="EBI-741037">
        <id>Q9BRK4</id>
        <label>LZTS2</label>
    </interactant>
    <organismsDiffer>false</organismsDiffer>
    <experiments>3</experiments>
</comment>
<comment type="interaction">
    <interactant intactId="EBI-464729">
        <id>P52298</id>
    </interactant>
    <interactant intactId="EBI-464743">
        <id>Q09161</id>
        <label>NCBP1</label>
    </interactant>
    <organismsDiffer>false</organismsDiffer>
    <experiments>54</experiments>
</comment>
<comment type="interaction">
    <interactant intactId="EBI-15798444">
        <id>P52298-1</id>
    </interactant>
    <interactant intactId="EBI-15488647">
        <id>Q14974-1</id>
        <label>KPNB1</label>
    </interactant>
    <organismsDiffer>false</organismsDiffer>
    <experiments>2</experiments>
</comment>
<comment type="interaction">
    <interactant intactId="EBI-15798444">
        <id>P52298-1</id>
    </interactant>
    <interactant intactId="EBI-464743">
        <id>Q09161</id>
        <label>NCBP1</label>
    </interactant>
    <organismsDiffer>false</organismsDiffer>
    <experiments>8</experiments>
</comment>
<comment type="subcellular location">
    <subcellularLocation>
        <location evidence="15">Nucleus</location>
    </subcellularLocation>
    <subcellularLocation>
        <location evidence="15">Cytoplasm</location>
    </subcellularLocation>
</comment>
<comment type="alternative products">
    <event type="alternative splicing"/>
    <isoform>
        <id>P52298-1</id>
        <name>1</name>
        <sequence type="displayed"/>
    </isoform>
    <isoform>
        <id>P52298-2</id>
        <name>2</name>
        <sequence type="described" ref="VSP_038125"/>
    </isoform>
    <isoform>
        <id>P52298-3</id>
        <name>3</name>
        <sequence type="described" ref="VSP_053823"/>
    </isoform>
</comment>
<comment type="similarity">
    <text evidence="18">Belongs to the RRM NCBP2 family.</text>
</comment>
<accession>P52298</accession>
<accession>B2RE91</accession>
<accession>B4DMK7</accession>
<accession>E9PAR5</accession>
<accession>Q14924</accession>
<accession>Q2TS50</accession>
<organism>
    <name type="scientific">Homo sapiens</name>
    <name type="common">Human</name>
    <dbReference type="NCBI Taxonomy" id="9606"/>
    <lineage>
        <taxon>Eukaryota</taxon>
        <taxon>Metazoa</taxon>
        <taxon>Chordata</taxon>
        <taxon>Craniata</taxon>
        <taxon>Vertebrata</taxon>
        <taxon>Euteleostomi</taxon>
        <taxon>Mammalia</taxon>
        <taxon>Eutheria</taxon>
        <taxon>Euarchontoglires</taxon>
        <taxon>Primates</taxon>
        <taxon>Haplorrhini</taxon>
        <taxon>Catarrhini</taxon>
        <taxon>Hominidae</taxon>
        <taxon>Homo</taxon>
    </lineage>
</organism>
<dbReference type="EMBL" id="X84157">
    <property type="protein sequence ID" value="CAA58962.1"/>
    <property type="molecule type" value="mRNA"/>
</dbReference>
<dbReference type="EMBL" id="D59253">
    <property type="protein sequence ID" value="BAA09599.1"/>
    <property type="molecule type" value="mRNA"/>
</dbReference>
<dbReference type="EMBL" id="AK297506">
    <property type="protein sequence ID" value="BAG59919.1"/>
    <property type="molecule type" value="mRNA"/>
</dbReference>
<dbReference type="EMBL" id="AK315903">
    <property type="protein sequence ID" value="BAH14274.1"/>
    <property type="molecule type" value="mRNA"/>
</dbReference>
<dbReference type="EMBL" id="AK316601">
    <property type="protein sequence ID" value="BAG38188.1"/>
    <property type="molecule type" value="mRNA"/>
</dbReference>
<dbReference type="EMBL" id="AY644767">
    <property type="protein sequence ID" value="AAV85455.1"/>
    <property type="molecule type" value="mRNA"/>
</dbReference>
<dbReference type="EMBL" id="BT006842">
    <property type="protein sequence ID" value="AAP35488.1"/>
    <property type="molecule type" value="mRNA"/>
</dbReference>
<dbReference type="EMBL" id="AC011322">
    <property type="status" value="NOT_ANNOTATED_CDS"/>
    <property type="molecule type" value="Genomic_DNA"/>
</dbReference>
<dbReference type="EMBL" id="CH471191">
    <property type="protein sequence ID" value="EAW53624.1"/>
    <property type="molecule type" value="Genomic_DNA"/>
</dbReference>
<dbReference type="EMBL" id="BC001255">
    <property type="protein sequence ID" value="AAH01255.1"/>
    <property type="molecule type" value="mRNA"/>
</dbReference>
<dbReference type="CCDS" id="CCDS3323.1">
    <molecule id="P52298-1"/>
</dbReference>
<dbReference type="CCDS" id="CCDS46986.1">
    <molecule id="P52298-3"/>
</dbReference>
<dbReference type="CCDS" id="CCDS77878.1">
    <molecule id="P52298-2"/>
</dbReference>
<dbReference type="PIR" id="I37222">
    <property type="entry name" value="I37222"/>
</dbReference>
<dbReference type="PIR" id="S60109">
    <property type="entry name" value="S60109"/>
</dbReference>
<dbReference type="RefSeq" id="NP_001036005.1">
    <molecule id="P52298-3"/>
    <property type="nucleotide sequence ID" value="NM_001042540.2"/>
</dbReference>
<dbReference type="RefSeq" id="NP_001294965.1">
    <molecule id="P52298-2"/>
    <property type="nucleotide sequence ID" value="NM_001308036.2"/>
</dbReference>
<dbReference type="RefSeq" id="NP_031388.2">
    <molecule id="P52298-1"/>
    <property type="nucleotide sequence ID" value="NM_007362.3"/>
</dbReference>
<dbReference type="PDB" id="1H2T">
    <property type="method" value="X-ray"/>
    <property type="resolution" value="2.15 A"/>
    <property type="chains" value="Z=1-156"/>
</dbReference>
<dbReference type="PDB" id="1H2U">
    <property type="method" value="X-ray"/>
    <property type="resolution" value="2.40 A"/>
    <property type="chains" value="X/Y=1-156"/>
</dbReference>
<dbReference type="PDB" id="1H2V">
    <property type="method" value="X-ray"/>
    <property type="resolution" value="2.00 A"/>
    <property type="chains" value="Z=1-156"/>
</dbReference>
<dbReference type="PDB" id="1H6K">
    <property type="method" value="X-ray"/>
    <property type="resolution" value="2.00 A"/>
    <property type="chains" value="X/Y/Z=22-120"/>
</dbReference>
<dbReference type="PDB" id="1N52">
    <property type="method" value="X-ray"/>
    <property type="resolution" value="2.11 A"/>
    <property type="chains" value="B=1-156"/>
</dbReference>
<dbReference type="PDB" id="1N54">
    <property type="method" value="X-ray"/>
    <property type="resolution" value="2.72 A"/>
    <property type="chains" value="B=1-156"/>
</dbReference>
<dbReference type="PDB" id="3FEX">
    <property type="method" value="X-ray"/>
    <property type="resolution" value="3.55 A"/>
    <property type="chains" value="B=1-156"/>
</dbReference>
<dbReference type="PDB" id="3FEY">
    <property type="method" value="X-ray"/>
    <property type="resolution" value="2.20 A"/>
    <property type="chains" value="B=1-156"/>
</dbReference>
<dbReference type="PDB" id="5OO6">
    <property type="method" value="X-ray"/>
    <property type="resolution" value="2.80 A"/>
    <property type="chains" value="B/E/H/K/N/Q/T/W=1-156"/>
</dbReference>
<dbReference type="PDB" id="5OOB">
    <property type="method" value="X-ray"/>
    <property type="resolution" value="2.79 A"/>
    <property type="chains" value="B/D/G/J=1-156"/>
</dbReference>
<dbReference type="PDB" id="6D0Y">
    <property type="method" value="X-ray"/>
    <property type="resolution" value="2.68 A"/>
    <property type="chains" value="A=1-156"/>
</dbReference>
<dbReference type="PDB" id="7ABG">
    <property type="method" value="EM"/>
    <property type="resolution" value="7.80 A"/>
    <property type="chains" value="A1=1-156"/>
</dbReference>
<dbReference type="PDB" id="8BY6">
    <property type="method" value="EM"/>
    <property type="resolution" value="3.19 A"/>
    <property type="chains" value="B=1-156"/>
</dbReference>
<dbReference type="PDB" id="8PMP">
    <property type="method" value="EM"/>
    <property type="resolution" value="3.43 A"/>
    <property type="chains" value="B=1-156"/>
</dbReference>
<dbReference type="PDB" id="8PNT">
    <property type="method" value="EM"/>
    <property type="resolution" value="3.46 A"/>
    <property type="chains" value="B=1-156"/>
</dbReference>
<dbReference type="PDB" id="8SRR">
    <property type="method" value="EM"/>
    <property type="resolution" value="3.22 A"/>
    <property type="chains" value="B=1-156"/>
</dbReference>
<dbReference type="PDB" id="8SUY">
    <property type="method" value="EM"/>
    <property type="resolution" value="3.38 A"/>
    <property type="chains" value="B=1-156"/>
</dbReference>
<dbReference type="PDBsum" id="1H2T"/>
<dbReference type="PDBsum" id="1H2U"/>
<dbReference type="PDBsum" id="1H2V"/>
<dbReference type="PDBsum" id="1H6K"/>
<dbReference type="PDBsum" id="1N52"/>
<dbReference type="PDBsum" id="1N54"/>
<dbReference type="PDBsum" id="3FEX"/>
<dbReference type="PDBsum" id="3FEY"/>
<dbReference type="PDBsum" id="5OO6"/>
<dbReference type="PDBsum" id="5OOB"/>
<dbReference type="PDBsum" id="6D0Y"/>
<dbReference type="PDBsum" id="7ABG"/>
<dbReference type="PDBsum" id="8BY6"/>
<dbReference type="PDBsum" id="8PMP"/>
<dbReference type="PDBsum" id="8PNT"/>
<dbReference type="PDBsum" id="8SRR"/>
<dbReference type="PDBsum" id="8SUY"/>
<dbReference type="EMDB" id="EMD-11695"/>
<dbReference type="EMDB" id="EMD-16321"/>
<dbReference type="EMDB" id="EMD-17763"/>
<dbReference type="EMDB" id="EMD-17784"/>
<dbReference type="EMDB" id="EMD-40739"/>
<dbReference type="EMDB" id="EMD-40780"/>
<dbReference type="SMR" id="P52298"/>
<dbReference type="BioGRID" id="116578">
    <property type="interactions" value="146"/>
</dbReference>
<dbReference type="ComplexPortal" id="CPX-1427">
    <property type="entry name" value="Nuclear cap-binding complex"/>
</dbReference>
<dbReference type="CORUM" id="P52298"/>
<dbReference type="DIP" id="DIP-33246N"/>
<dbReference type="FunCoup" id="P52298">
    <property type="interactions" value="3129"/>
</dbReference>
<dbReference type="IntAct" id="P52298">
    <property type="interactions" value="270"/>
</dbReference>
<dbReference type="MINT" id="P52298"/>
<dbReference type="STRING" id="9606.ENSP00000326806"/>
<dbReference type="ChEMBL" id="CHEMBL4665589"/>
<dbReference type="TCDB" id="9.A.60.1.1">
    <property type="family name" value="the small nuclear rna exporter (snrna-e) family"/>
</dbReference>
<dbReference type="GlyGen" id="P52298">
    <property type="glycosylation" value="1 site, 1 O-linked glycan (1 site)"/>
</dbReference>
<dbReference type="iPTMnet" id="P52298"/>
<dbReference type="PhosphoSitePlus" id="P52298"/>
<dbReference type="SwissPalm" id="P52298"/>
<dbReference type="BioMuta" id="NCBP2"/>
<dbReference type="DMDM" id="1705651"/>
<dbReference type="jPOST" id="P52298"/>
<dbReference type="MassIVE" id="P52298"/>
<dbReference type="PaxDb" id="9606-ENSP00000326806"/>
<dbReference type="PeptideAtlas" id="P52298"/>
<dbReference type="ProteomicsDB" id="19067"/>
<dbReference type="ProteomicsDB" id="56477">
    <molecule id="P52298-1"/>
</dbReference>
<dbReference type="ProteomicsDB" id="56478">
    <molecule id="P52298-2"/>
</dbReference>
<dbReference type="Pumba" id="P52298"/>
<dbReference type="TopDownProteomics" id="P52298-1">
    <molecule id="P52298-1"/>
</dbReference>
<dbReference type="Antibodypedia" id="33952">
    <property type="antibodies" value="189 antibodies from 29 providers"/>
</dbReference>
<dbReference type="DNASU" id="22916"/>
<dbReference type="Ensembl" id="ENST00000321256.10">
    <molecule id="P52298-1"/>
    <property type="protein sequence ID" value="ENSP00000326806.5"/>
    <property type="gene ID" value="ENSG00000114503.11"/>
</dbReference>
<dbReference type="Ensembl" id="ENST00000427641.2">
    <molecule id="P52298-3"/>
    <property type="protein sequence ID" value="ENSP00000397619.2"/>
    <property type="gene ID" value="ENSG00000114503.11"/>
</dbReference>
<dbReference type="Ensembl" id="ENST00000452404.6">
    <molecule id="P52298-2"/>
    <property type="protein sequence ID" value="ENSP00000412785.2"/>
    <property type="gene ID" value="ENSG00000114503.11"/>
</dbReference>
<dbReference type="GeneID" id="22916"/>
<dbReference type="KEGG" id="hsa:22916"/>
<dbReference type="MANE-Select" id="ENST00000321256.10">
    <property type="protein sequence ID" value="ENSP00000326806.5"/>
    <property type="RefSeq nucleotide sequence ID" value="NM_007362.5"/>
    <property type="RefSeq protein sequence ID" value="NP_031388.2"/>
</dbReference>
<dbReference type="UCSC" id="uc003fxd.2">
    <molecule id="P52298-1"/>
    <property type="organism name" value="human"/>
</dbReference>
<dbReference type="AGR" id="HGNC:7659"/>
<dbReference type="CTD" id="22916"/>
<dbReference type="DisGeNET" id="22916"/>
<dbReference type="GeneCards" id="NCBP2"/>
<dbReference type="HGNC" id="HGNC:7659">
    <property type="gene designation" value="NCBP2"/>
</dbReference>
<dbReference type="HPA" id="ENSG00000114503">
    <property type="expression patterns" value="Low tissue specificity"/>
</dbReference>
<dbReference type="MIM" id="605133">
    <property type="type" value="gene"/>
</dbReference>
<dbReference type="neXtProt" id="NX_P52298"/>
<dbReference type="OpenTargets" id="ENSG00000114503"/>
<dbReference type="PharmGKB" id="PA31462"/>
<dbReference type="VEuPathDB" id="HostDB:ENSG00000114503"/>
<dbReference type="eggNOG" id="KOG0121">
    <property type="taxonomic scope" value="Eukaryota"/>
</dbReference>
<dbReference type="GeneTree" id="ENSGT00390000003197"/>
<dbReference type="HOGENOM" id="CLU_070952_2_0_1"/>
<dbReference type="InParanoid" id="P52298"/>
<dbReference type="OMA" id="TKCASPE"/>
<dbReference type="OrthoDB" id="201398at2759"/>
<dbReference type="PAN-GO" id="P52298">
    <property type="GO annotations" value="3 GO annotations based on evolutionary models"/>
</dbReference>
<dbReference type="PhylomeDB" id="P52298"/>
<dbReference type="TreeFam" id="TF313897"/>
<dbReference type="PathwayCommons" id="P52298"/>
<dbReference type="Reactome" id="R-HSA-111367">
    <property type="pathway name" value="SLBP independent Processing of Histone Pre-mRNAs"/>
</dbReference>
<dbReference type="Reactome" id="R-HSA-112382">
    <property type="pathway name" value="Formation of RNA Pol II elongation complex"/>
</dbReference>
<dbReference type="Reactome" id="R-HSA-113418">
    <property type="pathway name" value="Formation of the Early Elongation Complex"/>
</dbReference>
<dbReference type="Reactome" id="R-HSA-159227">
    <property type="pathway name" value="Transport of the SLBP independent Mature mRNA"/>
</dbReference>
<dbReference type="Reactome" id="R-HSA-159230">
    <property type="pathway name" value="Transport of the SLBP Dependant Mature mRNA"/>
</dbReference>
<dbReference type="Reactome" id="R-HSA-159231">
    <property type="pathway name" value="Transport of Mature mRNA Derived from an Intronless Transcript"/>
</dbReference>
<dbReference type="Reactome" id="R-HSA-159236">
    <property type="pathway name" value="Transport of Mature mRNA derived from an Intron-Containing Transcript"/>
</dbReference>
<dbReference type="Reactome" id="R-HSA-167152">
    <property type="pathway name" value="Formation of HIV elongation complex in the absence of HIV Tat"/>
</dbReference>
<dbReference type="Reactome" id="R-HSA-167158">
    <property type="pathway name" value="Formation of the HIV-1 Early Elongation Complex"/>
</dbReference>
<dbReference type="Reactome" id="R-HSA-167200">
    <property type="pathway name" value="Formation of HIV-1 elongation complex containing HIV-1 Tat"/>
</dbReference>
<dbReference type="Reactome" id="R-HSA-167242">
    <property type="pathway name" value="Abortive elongation of HIV-1 transcript in the absence of Tat"/>
</dbReference>
<dbReference type="Reactome" id="R-HSA-191859">
    <property type="pathway name" value="snRNP Assembly"/>
</dbReference>
<dbReference type="Reactome" id="R-HSA-674695">
    <property type="pathway name" value="RNA Polymerase II Pre-transcription Events"/>
</dbReference>
<dbReference type="Reactome" id="R-HSA-6803529">
    <property type="pathway name" value="FGFR2 alternative splicing"/>
</dbReference>
<dbReference type="Reactome" id="R-HSA-6807505">
    <property type="pathway name" value="RNA polymerase II transcribes snRNA genes"/>
</dbReference>
<dbReference type="Reactome" id="R-HSA-72086">
    <property type="pathway name" value="mRNA Capping"/>
</dbReference>
<dbReference type="Reactome" id="R-HSA-72163">
    <property type="pathway name" value="mRNA Splicing - Major Pathway"/>
</dbReference>
<dbReference type="Reactome" id="R-HSA-72165">
    <property type="pathway name" value="mRNA Splicing - Minor Pathway"/>
</dbReference>
<dbReference type="Reactome" id="R-HSA-72187">
    <property type="pathway name" value="mRNA 3'-end processing"/>
</dbReference>
<dbReference type="Reactome" id="R-HSA-72203">
    <property type="pathway name" value="Processing of Capped Intron-Containing Pre-mRNA"/>
</dbReference>
<dbReference type="Reactome" id="R-HSA-73856">
    <property type="pathway name" value="RNA Polymerase II Transcription Termination"/>
</dbReference>
<dbReference type="Reactome" id="R-HSA-77588">
    <property type="pathway name" value="SLBP Dependent Processing of Replication-Dependent Histone Pre-mRNAs"/>
</dbReference>
<dbReference type="Reactome" id="R-HSA-77595">
    <property type="pathway name" value="Processing of Intronless Pre-mRNAs"/>
</dbReference>
<dbReference type="Reactome" id="R-HSA-8851708">
    <property type="pathway name" value="Signaling by FGFR2 IIIa TM"/>
</dbReference>
<dbReference type="Reactome" id="R-HSA-9010553">
    <property type="pathway name" value="Regulation of expression of SLITs and ROBOs"/>
</dbReference>
<dbReference type="Reactome" id="R-HSA-975956">
    <property type="pathway name" value="Nonsense Mediated Decay (NMD) independent of the Exon Junction Complex (EJC)"/>
</dbReference>
<dbReference type="Reactome" id="R-HSA-975957">
    <property type="pathway name" value="Nonsense Mediated Decay (NMD) enhanced by the Exon Junction Complex (EJC)"/>
</dbReference>
<dbReference type="SignaLink" id="P52298"/>
<dbReference type="SIGNOR" id="P52298"/>
<dbReference type="BioGRID-ORCS" id="22916">
    <property type="hits" value="820 hits in 1174 CRISPR screens"/>
</dbReference>
<dbReference type="CD-CODE" id="232F8A39">
    <property type="entry name" value="P-body"/>
</dbReference>
<dbReference type="CD-CODE" id="804901D1">
    <property type="entry name" value="Nuclear speckle"/>
</dbReference>
<dbReference type="ChiTaRS" id="NCBP2">
    <property type="organism name" value="human"/>
</dbReference>
<dbReference type="EvolutionaryTrace" id="P52298"/>
<dbReference type="GenomeRNAi" id="22916"/>
<dbReference type="Pharos" id="P52298">
    <property type="development level" value="Tbio"/>
</dbReference>
<dbReference type="PRO" id="PR:P52298"/>
<dbReference type="Proteomes" id="UP000005640">
    <property type="component" value="Chromosome 3"/>
</dbReference>
<dbReference type="RNAct" id="P52298">
    <property type="molecule type" value="protein"/>
</dbReference>
<dbReference type="Bgee" id="ENSG00000114503">
    <property type="expression patterns" value="Expressed in ganglionic eminence and 209 other cell types or tissues"/>
</dbReference>
<dbReference type="ExpressionAtlas" id="P52298">
    <property type="expression patterns" value="baseline and differential"/>
</dbReference>
<dbReference type="GO" id="GO:0036064">
    <property type="term" value="C:ciliary basal body"/>
    <property type="evidence" value="ECO:0000314"/>
    <property type="project" value="HPA"/>
</dbReference>
<dbReference type="GO" id="GO:0005737">
    <property type="term" value="C:cytoplasm"/>
    <property type="evidence" value="ECO:0000314"/>
    <property type="project" value="UniProtKB"/>
</dbReference>
<dbReference type="GO" id="GO:0005829">
    <property type="term" value="C:cytosol"/>
    <property type="evidence" value="ECO:0000314"/>
    <property type="project" value="HPA"/>
</dbReference>
<dbReference type="GO" id="GO:0005846">
    <property type="term" value="C:nuclear cap binding complex"/>
    <property type="evidence" value="ECO:0000314"/>
    <property type="project" value="UniProtKB"/>
</dbReference>
<dbReference type="GO" id="GO:0005654">
    <property type="term" value="C:nucleoplasm"/>
    <property type="evidence" value="ECO:0000314"/>
    <property type="project" value="HPA"/>
</dbReference>
<dbReference type="GO" id="GO:0005634">
    <property type="term" value="C:nucleus"/>
    <property type="evidence" value="ECO:0000314"/>
    <property type="project" value="UniProtKB"/>
</dbReference>
<dbReference type="GO" id="GO:0034518">
    <property type="term" value="C:RNA cap binding complex"/>
    <property type="evidence" value="ECO:0000315"/>
    <property type="project" value="CAFA"/>
</dbReference>
<dbReference type="GO" id="GO:0003677">
    <property type="term" value="F:DNA binding"/>
    <property type="evidence" value="ECO:0000269"/>
    <property type="project" value="DisProt"/>
</dbReference>
<dbReference type="GO" id="GO:0003729">
    <property type="term" value="F:mRNA binding"/>
    <property type="evidence" value="ECO:0000314"/>
    <property type="project" value="UniProtKB"/>
</dbReference>
<dbReference type="GO" id="GO:0000340">
    <property type="term" value="F:RNA 7-methylguanosine cap binding"/>
    <property type="evidence" value="ECO:0000314"/>
    <property type="project" value="UniProtKB"/>
</dbReference>
<dbReference type="GO" id="GO:0003723">
    <property type="term" value="F:RNA binding"/>
    <property type="evidence" value="ECO:0007005"/>
    <property type="project" value="UniProtKB"/>
</dbReference>
<dbReference type="GO" id="GO:0000339">
    <property type="term" value="F:RNA cap binding"/>
    <property type="evidence" value="ECO:0000318"/>
    <property type="project" value="GO_Central"/>
</dbReference>
<dbReference type="GO" id="GO:0017069">
    <property type="term" value="F:snRNA binding"/>
    <property type="evidence" value="ECO:0000314"/>
    <property type="project" value="UniProtKB"/>
</dbReference>
<dbReference type="GO" id="GO:0000380">
    <property type="term" value="P:alternative mRNA splicing, via spliceosome"/>
    <property type="evidence" value="ECO:0000303"/>
    <property type="project" value="ComplexPortal"/>
</dbReference>
<dbReference type="GO" id="GO:0002191">
    <property type="term" value="P:cap-dependent translational initiation"/>
    <property type="evidence" value="ECO:0000303"/>
    <property type="project" value="ComplexPortal"/>
</dbReference>
<dbReference type="GO" id="GO:0008334">
    <property type="term" value="P:histone mRNA metabolic process"/>
    <property type="evidence" value="ECO:0000315"/>
    <property type="project" value="ComplexPortal"/>
</dbReference>
<dbReference type="GO" id="GO:0035195">
    <property type="term" value="P:miRNA-mediated post-transcriptional gene silencing"/>
    <property type="evidence" value="ECO:0000303"/>
    <property type="project" value="ComplexPortal"/>
</dbReference>
<dbReference type="GO" id="GO:0031124">
    <property type="term" value="P:mRNA 3'-end processing"/>
    <property type="evidence" value="ECO:0000303"/>
    <property type="project" value="ComplexPortal"/>
</dbReference>
<dbReference type="GO" id="GO:0045292">
    <property type="term" value="P:mRNA cis splicing, via spliceosome"/>
    <property type="evidence" value="ECO:0000314"/>
    <property type="project" value="UniProtKB"/>
</dbReference>
<dbReference type="GO" id="GO:0006406">
    <property type="term" value="P:mRNA export from nucleus"/>
    <property type="evidence" value="ECO:0000353"/>
    <property type="project" value="ComplexPortal"/>
</dbReference>
<dbReference type="GO" id="GO:0016071">
    <property type="term" value="P:mRNA metabolic process"/>
    <property type="evidence" value="ECO:0000315"/>
    <property type="project" value="UniProtKB"/>
</dbReference>
<dbReference type="GO" id="GO:0000398">
    <property type="term" value="P:mRNA splicing, via spliceosome"/>
    <property type="evidence" value="ECO:0000318"/>
    <property type="project" value="GO_Central"/>
</dbReference>
<dbReference type="GO" id="GO:0042789">
    <property type="term" value="P:mRNA transcription by RNA polymerase II"/>
    <property type="evidence" value="ECO:0000314"/>
    <property type="project" value="ComplexPortal"/>
</dbReference>
<dbReference type="GO" id="GO:0000184">
    <property type="term" value="P:nuclear-transcribed mRNA catabolic process, nonsense-mediated decay"/>
    <property type="evidence" value="ECO:0000314"/>
    <property type="project" value="UniProtKB"/>
</dbReference>
<dbReference type="GO" id="GO:0031442">
    <property type="term" value="P:positive regulation of mRNA 3'-end processing"/>
    <property type="evidence" value="ECO:0000315"/>
    <property type="project" value="UniProtKB"/>
</dbReference>
<dbReference type="GO" id="GO:0046833">
    <property type="term" value="P:positive regulation of RNA export from nucleus"/>
    <property type="evidence" value="ECO:0000250"/>
    <property type="project" value="UniProtKB"/>
</dbReference>
<dbReference type="GO" id="GO:0032968">
    <property type="term" value="P:positive regulation of transcription elongation by RNA polymerase II"/>
    <property type="evidence" value="ECO:0000303"/>
    <property type="project" value="ComplexPortal"/>
</dbReference>
<dbReference type="GO" id="GO:0031053">
    <property type="term" value="P:primary miRNA processing"/>
    <property type="evidence" value="ECO:0000303"/>
    <property type="project" value="ComplexPortal"/>
</dbReference>
<dbReference type="GO" id="GO:0006446">
    <property type="term" value="P:regulation of translational initiation"/>
    <property type="evidence" value="ECO:0000314"/>
    <property type="project" value="UniProtKB"/>
</dbReference>
<dbReference type="GO" id="GO:0035194">
    <property type="term" value="P:regulatory ncRNA-mediated post-transcriptional gene silencing"/>
    <property type="evidence" value="ECO:0000303"/>
    <property type="project" value="ComplexPortal"/>
</dbReference>
<dbReference type="GO" id="GO:0008380">
    <property type="term" value="P:RNA splicing"/>
    <property type="evidence" value="ECO:0000250"/>
    <property type="project" value="UniProtKB"/>
</dbReference>
<dbReference type="GO" id="GO:0006408">
    <property type="term" value="P:snRNA export from nucleus"/>
    <property type="evidence" value="ECO:0000250"/>
    <property type="project" value="UniProtKB"/>
</dbReference>
<dbReference type="CDD" id="cd12240">
    <property type="entry name" value="RRM_NCBP2"/>
    <property type="match status" value="1"/>
</dbReference>
<dbReference type="DisProt" id="DP00393"/>
<dbReference type="FunFam" id="3.30.70.330:FF:000128">
    <property type="entry name" value="Nuclear cap-binding protein subunit 2"/>
    <property type="match status" value="1"/>
</dbReference>
<dbReference type="Gene3D" id="3.30.70.330">
    <property type="match status" value="1"/>
</dbReference>
<dbReference type="IDEAL" id="IID00238"/>
<dbReference type="InterPro" id="IPR027157">
    <property type="entry name" value="NCBP2"/>
</dbReference>
<dbReference type="InterPro" id="IPR034148">
    <property type="entry name" value="NCBP2_RRM"/>
</dbReference>
<dbReference type="InterPro" id="IPR012677">
    <property type="entry name" value="Nucleotide-bd_a/b_plait_sf"/>
</dbReference>
<dbReference type="InterPro" id="IPR035979">
    <property type="entry name" value="RBD_domain_sf"/>
</dbReference>
<dbReference type="InterPro" id="IPR000504">
    <property type="entry name" value="RRM_dom"/>
</dbReference>
<dbReference type="PANTHER" id="PTHR18847">
    <property type="entry name" value="20 KD NUCLEAR CAP BINDING PROTEIN"/>
    <property type="match status" value="1"/>
</dbReference>
<dbReference type="PANTHER" id="PTHR18847:SF0">
    <property type="entry name" value="NUCLEAR CAP-BINDING PROTEIN SUBUNIT 2"/>
    <property type="match status" value="1"/>
</dbReference>
<dbReference type="Pfam" id="PF00076">
    <property type="entry name" value="RRM_1"/>
    <property type="match status" value="1"/>
</dbReference>
<dbReference type="SMART" id="SM00360">
    <property type="entry name" value="RRM"/>
    <property type="match status" value="1"/>
</dbReference>
<dbReference type="SUPFAM" id="SSF54928">
    <property type="entry name" value="RNA-binding domain, RBD"/>
    <property type="match status" value="1"/>
</dbReference>
<dbReference type="PROSITE" id="PS50102">
    <property type="entry name" value="RRM"/>
    <property type="match status" value="1"/>
</dbReference>